<proteinExistence type="inferred from homology"/>
<organism>
    <name type="scientific">Bacillus subtilis (strain 168)</name>
    <dbReference type="NCBI Taxonomy" id="224308"/>
    <lineage>
        <taxon>Bacteria</taxon>
        <taxon>Bacillati</taxon>
        <taxon>Bacillota</taxon>
        <taxon>Bacilli</taxon>
        <taxon>Bacillales</taxon>
        <taxon>Bacillaceae</taxon>
        <taxon>Bacillus</taxon>
    </lineage>
</organism>
<protein>
    <recommendedName>
        <fullName>Putative acetyltransferase YvoF</fullName>
        <ecNumber>2.3.1.-</ecNumber>
    </recommendedName>
</protein>
<reference key="1">
    <citation type="submission" date="1997-11" db="EMBL/GenBank/DDBJ databases">
        <title>Nucleotide sequence of the 300-304 chromosomal segment of Bacillus subtilis.</title>
        <authorList>
            <person name="Lazarevic V."/>
            <person name="Soldo B."/>
            <person name="Rivolta C."/>
            <person name="Reynolds S."/>
            <person name="Mauel C."/>
            <person name="Karamata D."/>
        </authorList>
    </citation>
    <scope>NUCLEOTIDE SEQUENCE [GENOMIC DNA]</scope>
</reference>
<reference key="2">
    <citation type="journal article" date="1997" name="Nature">
        <title>The complete genome sequence of the Gram-positive bacterium Bacillus subtilis.</title>
        <authorList>
            <person name="Kunst F."/>
            <person name="Ogasawara N."/>
            <person name="Moszer I."/>
            <person name="Albertini A.M."/>
            <person name="Alloni G."/>
            <person name="Azevedo V."/>
            <person name="Bertero M.G."/>
            <person name="Bessieres P."/>
            <person name="Bolotin A."/>
            <person name="Borchert S."/>
            <person name="Borriss R."/>
            <person name="Boursier L."/>
            <person name="Brans A."/>
            <person name="Braun M."/>
            <person name="Brignell S.C."/>
            <person name="Bron S."/>
            <person name="Brouillet S."/>
            <person name="Bruschi C.V."/>
            <person name="Caldwell B."/>
            <person name="Capuano V."/>
            <person name="Carter N.M."/>
            <person name="Choi S.-K."/>
            <person name="Codani J.-J."/>
            <person name="Connerton I.F."/>
            <person name="Cummings N.J."/>
            <person name="Daniel R.A."/>
            <person name="Denizot F."/>
            <person name="Devine K.M."/>
            <person name="Duesterhoeft A."/>
            <person name="Ehrlich S.D."/>
            <person name="Emmerson P.T."/>
            <person name="Entian K.-D."/>
            <person name="Errington J."/>
            <person name="Fabret C."/>
            <person name="Ferrari E."/>
            <person name="Foulger D."/>
            <person name="Fritz C."/>
            <person name="Fujita M."/>
            <person name="Fujita Y."/>
            <person name="Fuma S."/>
            <person name="Galizzi A."/>
            <person name="Galleron N."/>
            <person name="Ghim S.-Y."/>
            <person name="Glaser P."/>
            <person name="Goffeau A."/>
            <person name="Golightly E.J."/>
            <person name="Grandi G."/>
            <person name="Guiseppi G."/>
            <person name="Guy B.J."/>
            <person name="Haga K."/>
            <person name="Haiech J."/>
            <person name="Harwood C.R."/>
            <person name="Henaut A."/>
            <person name="Hilbert H."/>
            <person name="Holsappel S."/>
            <person name="Hosono S."/>
            <person name="Hullo M.-F."/>
            <person name="Itaya M."/>
            <person name="Jones L.-M."/>
            <person name="Joris B."/>
            <person name="Karamata D."/>
            <person name="Kasahara Y."/>
            <person name="Klaerr-Blanchard M."/>
            <person name="Klein C."/>
            <person name="Kobayashi Y."/>
            <person name="Koetter P."/>
            <person name="Koningstein G."/>
            <person name="Krogh S."/>
            <person name="Kumano M."/>
            <person name="Kurita K."/>
            <person name="Lapidus A."/>
            <person name="Lardinois S."/>
            <person name="Lauber J."/>
            <person name="Lazarevic V."/>
            <person name="Lee S.-M."/>
            <person name="Levine A."/>
            <person name="Liu H."/>
            <person name="Masuda S."/>
            <person name="Mauel C."/>
            <person name="Medigue C."/>
            <person name="Medina N."/>
            <person name="Mellado R.P."/>
            <person name="Mizuno M."/>
            <person name="Moestl D."/>
            <person name="Nakai S."/>
            <person name="Noback M."/>
            <person name="Noone D."/>
            <person name="O'Reilly M."/>
            <person name="Ogawa K."/>
            <person name="Ogiwara A."/>
            <person name="Oudega B."/>
            <person name="Park S.-H."/>
            <person name="Parro V."/>
            <person name="Pohl T.M."/>
            <person name="Portetelle D."/>
            <person name="Porwollik S."/>
            <person name="Prescott A.M."/>
            <person name="Presecan E."/>
            <person name="Pujic P."/>
            <person name="Purnelle B."/>
            <person name="Rapoport G."/>
            <person name="Rey M."/>
            <person name="Reynolds S."/>
            <person name="Rieger M."/>
            <person name="Rivolta C."/>
            <person name="Rocha E."/>
            <person name="Roche B."/>
            <person name="Rose M."/>
            <person name="Sadaie Y."/>
            <person name="Sato T."/>
            <person name="Scanlan E."/>
            <person name="Schleich S."/>
            <person name="Schroeter R."/>
            <person name="Scoffone F."/>
            <person name="Sekiguchi J."/>
            <person name="Sekowska A."/>
            <person name="Seror S.J."/>
            <person name="Serror P."/>
            <person name="Shin B.-S."/>
            <person name="Soldo B."/>
            <person name="Sorokin A."/>
            <person name="Tacconi E."/>
            <person name="Takagi T."/>
            <person name="Takahashi H."/>
            <person name="Takemaru K."/>
            <person name="Takeuchi M."/>
            <person name="Tamakoshi A."/>
            <person name="Tanaka T."/>
            <person name="Terpstra P."/>
            <person name="Tognoni A."/>
            <person name="Tosato V."/>
            <person name="Uchiyama S."/>
            <person name="Vandenbol M."/>
            <person name="Vannier F."/>
            <person name="Vassarotti A."/>
            <person name="Viari A."/>
            <person name="Wambutt R."/>
            <person name="Wedler E."/>
            <person name="Wedler H."/>
            <person name="Weitzenegger T."/>
            <person name="Winters P."/>
            <person name="Wipat A."/>
            <person name="Yamamoto H."/>
            <person name="Yamane K."/>
            <person name="Yasumoto K."/>
            <person name="Yata K."/>
            <person name="Yoshida K."/>
            <person name="Yoshikawa H.-F."/>
            <person name="Zumstein E."/>
            <person name="Yoshikawa H."/>
            <person name="Danchin A."/>
        </authorList>
    </citation>
    <scope>NUCLEOTIDE SEQUENCE [LARGE SCALE GENOMIC DNA]</scope>
    <source>
        <strain>168</strain>
    </source>
</reference>
<gene>
    <name type="primary">yvoF</name>
    <name type="ordered locus">BSU34960</name>
</gene>
<keyword id="KW-0012">Acyltransferase</keyword>
<keyword id="KW-1185">Reference proteome</keyword>
<keyword id="KW-0677">Repeat</keyword>
<keyword id="KW-0808">Transferase</keyword>
<feature type="chain" id="PRO_0000360062" description="Putative acetyltransferase YvoF">
    <location>
        <begin position="1"/>
        <end position="172"/>
    </location>
</feature>
<evidence type="ECO:0000305" key="1"/>
<comment type="similarity">
    <text evidence="1">Belongs to the transferase hexapeptide repeat family.</text>
</comment>
<dbReference type="EC" id="2.3.1.-"/>
<dbReference type="EMBL" id="AF017113">
    <property type="protein sequence ID" value="AAC67290.1"/>
    <property type="molecule type" value="Genomic_DNA"/>
</dbReference>
<dbReference type="EMBL" id="AL009126">
    <property type="protein sequence ID" value="CAB15501.1"/>
    <property type="molecule type" value="Genomic_DNA"/>
</dbReference>
<dbReference type="PIR" id="H70044">
    <property type="entry name" value="H70044"/>
</dbReference>
<dbReference type="SMR" id="O34993"/>
<dbReference type="FunCoup" id="O34993">
    <property type="interactions" value="37"/>
</dbReference>
<dbReference type="STRING" id="224308.BSU34960"/>
<dbReference type="PaxDb" id="224308-BSU34960"/>
<dbReference type="EnsemblBacteria" id="CAB15501">
    <property type="protein sequence ID" value="CAB15501"/>
    <property type="gene ID" value="BSU_34960"/>
</dbReference>
<dbReference type="GeneID" id="936620"/>
<dbReference type="KEGG" id="bsu:BSU34960"/>
<dbReference type="PATRIC" id="fig|224308.179.peg.3784"/>
<dbReference type="eggNOG" id="COG0110">
    <property type="taxonomic scope" value="Bacteria"/>
</dbReference>
<dbReference type="InParanoid" id="O34993"/>
<dbReference type="OrthoDB" id="9801697at2"/>
<dbReference type="PhylomeDB" id="O34993"/>
<dbReference type="BioCyc" id="BSUB:BSU34960-MONOMER"/>
<dbReference type="Proteomes" id="UP000001570">
    <property type="component" value="Chromosome"/>
</dbReference>
<dbReference type="GO" id="GO:0016746">
    <property type="term" value="F:acyltransferase activity"/>
    <property type="evidence" value="ECO:0007669"/>
    <property type="project" value="UniProtKB-KW"/>
</dbReference>
<dbReference type="CDD" id="cd04647">
    <property type="entry name" value="LbH_MAT_like"/>
    <property type="match status" value="1"/>
</dbReference>
<dbReference type="Gene3D" id="2.160.10.10">
    <property type="entry name" value="Hexapeptide repeat proteins"/>
    <property type="match status" value="1"/>
</dbReference>
<dbReference type="InterPro" id="IPR001451">
    <property type="entry name" value="Hexapep"/>
</dbReference>
<dbReference type="InterPro" id="IPR050179">
    <property type="entry name" value="Trans_hexapeptide_repeat"/>
</dbReference>
<dbReference type="InterPro" id="IPR011004">
    <property type="entry name" value="Trimer_LpxA-like_sf"/>
</dbReference>
<dbReference type="PANTHER" id="PTHR43300">
    <property type="entry name" value="ACETYLTRANSFERASE"/>
    <property type="match status" value="1"/>
</dbReference>
<dbReference type="PANTHER" id="PTHR43300:SF6">
    <property type="entry name" value="ACETYLTRANSFERASE YVOF-RELATED"/>
    <property type="match status" value="1"/>
</dbReference>
<dbReference type="Pfam" id="PF00132">
    <property type="entry name" value="Hexapep"/>
    <property type="match status" value="1"/>
</dbReference>
<dbReference type="SUPFAM" id="SSF51161">
    <property type="entry name" value="Trimeric LpxA-like enzymes"/>
    <property type="match status" value="1"/>
</dbReference>
<accession>O34993</accession>
<accession>Q795F1</accession>
<name>YVOF_BACSU</name>
<sequence>MRKTDRHPVSGANSLWHVYQTVPFLKVVKNFIVIQIARYTPFIGMKNWLYRTFLRMKVGKQTSFALMVMPDIMFPEKISVGTNTIIGYNTTILAHEYLIHEYRIGKVLIGDEVMIGANTTILPGVKIGDGAVVSAGTLVHKDVPDGAFVGGNPMRIIYTKEEMQERLKKSAE</sequence>